<proteinExistence type="evidence at protein level"/>
<protein>
    <recommendedName>
        <fullName>Coiled-coil and C2 domain-containing protein 1B</fullName>
    </recommendedName>
    <alternativeName>
        <fullName>Five prime repressor element under dual repression-binding protein 2</fullName>
        <shortName>FRE under dual repression-binding protein 2</shortName>
        <shortName>Freud-2</shortName>
    </alternativeName>
</protein>
<sequence>MMPGPRPRKGPQARGQGVAAAKQMGLFMEFGPEDMLLGMDEAEDDEDLEAELLALTGEAQTTGKKPAPKGQAPLPMAHIEKLAADCMRDVEEEEEEEGLEEDAELLTELQEVLGVDEETEPLDGDEVADPGGSEEENGLEDTEPPVQTAVLTASAPAAQAGASQGLHALLEERIHNYREAAASAKEAGEAAKARRCERGLKTLESQLASVRRGRKINEDEIPPPVALGKRPLAPQEPANRSPETDPPAPPALESDNPSQPETSLPGISAQPVSDLDPDPRALLSSRQREYKVAALSAKRAGELDRARELMRIGKRFGAVLEALEKGQPVDLSAMPPAPEDLKPQQASQAPTAPSVIPPAVERVQPVMAPDVPATPVAPTESQTVLDALQQRLNKYREAGIQARSGGDERKARMHERIAKQYQDAIRAHRAGRKVNFAELPVPPGFPPIPGLESTMGVEEDAVAATLAAAEKLASAEDSAPADKDEDEPPGHLQGEPPAQAPVAKKPARPTVPSSQRLPEPRASSSKESPSPSVREQLALLEARKLQYQRAALQAKRSQDLEQAKAYLRVAKWLEAQIIQARSGRPVDLSKVPSPLTDEEGDFILIHHEDLRLSQKAEEVYAQLQKMLLEQQEKCLLFSKQFMHQGNVAETTRFEKLAQDRKKQLEILQLAQAQGLDPPTHHFELKTFQTVRIFSELNSTEMHLIIVRGMNLPAPPGVTPDDLDAFVRFEFHYPNSDQAQKSKTAVVKNTNSPEFDQLFKLNINRNHRGFKRVIQSKGIKFEIFHKGSFFRSDKLVGTAHLKLERLENECEIREIVEVLDGRKPTGGKLEVKVRLREPLSGQDVQMVTENWLVLEPRGL</sequence>
<organism>
    <name type="scientific">Homo sapiens</name>
    <name type="common">Human</name>
    <dbReference type="NCBI Taxonomy" id="9606"/>
    <lineage>
        <taxon>Eukaryota</taxon>
        <taxon>Metazoa</taxon>
        <taxon>Chordata</taxon>
        <taxon>Craniata</taxon>
        <taxon>Vertebrata</taxon>
        <taxon>Euteleostomi</taxon>
        <taxon>Mammalia</taxon>
        <taxon>Eutheria</taxon>
        <taxon>Euarchontoglires</taxon>
        <taxon>Primates</taxon>
        <taxon>Haplorrhini</taxon>
        <taxon>Catarrhini</taxon>
        <taxon>Hominidae</taxon>
        <taxon>Homo</taxon>
    </lineage>
</organism>
<evidence type="ECO:0000250" key="1">
    <source>
        <dbReference type="UniProtKB" id="Q8BRN9"/>
    </source>
</evidence>
<evidence type="ECO:0000255" key="2"/>
<evidence type="ECO:0000255" key="3">
    <source>
        <dbReference type="PROSITE-ProRule" id="PRU00041"/>
    </source>
</evidence>
<evidence type="ECO:0000256" key="4">
    <source>
        <dbReference type="SAM" id="MobiDB-lite"/>
    </source>
</evidence>
<evidence type="ECO:0000269" key="5">
    <source>
    </source>
</evidence>
<evidence type="ECO:0000269" key="6">
    <source>
    </source>
</evidence>
<evidence type="ECO:0000303" key="7">
    <source>
    </source>
</evidence>
<evidence type="ECO:0000303" key="8">
    <source>
    </source>
</evidence>
<evidence type="ECO:0000303" key="9">
    <source>
    </source>
</evidence>
<evidence type="ECO:0000305" key="10"/>
<evidence type="ECO:0007744" key="11">
    <source>
    </source>
</evidence>
<accession>Q5T0F9</accession>
<accession>Q49AE8</accession>
<accession>Q5T0F8</accession>
<accession>Q5T0G0</accession>
<accession>Q6ZNQ1</accession>
<accession>Q96AP3</accession>
<accession>Q96I04</accession>
<accession>Q96JJ1</accession>
<name>C2D1B_HUMAN</name>
<gene>
    <name type="primary">CC2D1B</name>
    <name type="synonym">KIAA1836</name>
    <name evidence="9" type="synonym">LGD1</name>
</gene>
<keyword id="KW-0025">Alternative splicing</keyword>
<keyword id="KW-0175">Coiled coil</keyword>
<keyword id="KW-0539">Nucleus</keyword>
<keyword id="KW-0597">Phosphoprotein</keyword>
<keyword id="KW-1267">Proteomics identification</keyword>
<keyword id="KW-1185">Reference proteome</keyword>
<keyword id="KW-0804">Transcription</keyword>
<keyword id="KW-0805">Transcription regulation</keyword>
<feature type="chain" id="PRO_0000288426" description="Coiled-coil and C2 domain-containing protein 1B">
    <location>
        <begin position="1"/>
        <end position="858"/>
    </location>
</feature>
<feature type="domain" description="C2" evidence="3">
    <location>
        <begin position="676"/>
        <end position="815"/>
    </location>
</feature>
<feature type="region of interest" description="Disordered" evidence="4">
    <location>
        <begin position="112"/>
        <end position="164"/>
    </location>
</feature>
<feature type="region of interest" description="Disordered" evidence="4">
    <location>
        <begin position="180"/>
        <end position="199"/>
    </location>
</feature>
<feature type="region of interest" description="Disordered" evidence="4">
    <location>
        <begin position="204"/>
        <end position="284"/>
    </location>
</feature>
<feature type="region of interest" description="Disordered" evidence="4">
    <location>
        <begin position="329"/>
        <end position="352"/>
    </location>
</feature>
<feature type="region of interest" description="Disordered" evidence="4">
    <location>
        <begin position="470"/>
        <end position="533"/>
    </location>
</feature>
<feature type="coiled-coil region" evidence="2">
    <location>
        <begin position="166"/>
        <end position="212"/>
    </location>
</feature>
<feature type="coiled-coil region" evidence="2">
    <location>
        <begin position="611"/>
        <end position="635"/>
    </location>
</feature>
<feature type="compositionally biased region" description="Acidic residues" evidence="4">
    <location>
        <begin position="114"/>
        <end position="143"/>
    </location>
</feature>
<feature type="compositionally biased region" description="Low complexity" evidence="4">
    <location>
        <begin position="153"/>
        <end position="164"/>
    </location>
</feature>
<feature type="compositionally biased region" description="Basic and acidic residues" evidence="4">
    <location>
        <begin position="186"/>
        <end position="199"/>
    </location>
</feature>
<feature type="compositionally biased region" description="Low complexity" evidence="4">
    <location>
        <begin position="520"/>
        <end position="532"/>
    </location>
</feature>
<feature type="modified residue" description="Phosphoserine" evidence="11">
    <location>
        <position position="209"/>
    </location>
</feature>
<feature type="modified residue" description="Phosphoserine" evidence="1">
    <location>
        <position position="593"/>
    </location>
</feature>
<feature type="modified residue" description="Phosphothreonine" evidence="1">
    <location>
        <position position="596"/>
    </location>
</feature>
<feature type="splice variant" id="VSP_025658" description="In isoform 4." evidence="8">
    <location>
        <begin position="1"/>
        <end position="625"/>
    </location>
</feature>
<feature type="splice variant" id="VSP_025657" description="In isoform 3." evidence="8">
    <location>
        <begin position="1"/>
        <end position="309"/>
    </location>
</feature>
<feature type="splice variant" id="VSP_025662" description="In isoform 5." evidence="7">
    <original>ELLTELQEVLGVDEETEPLD</original>
    <variation>GRDCAGDDFPSFAGFRSLCT</variation>
    <location>
        <begin position="104"/>
        <end position="123"/>
    </location>
</feature>
<feature type="splice variant" id="VSP_025663" description="In isoform 5." evidence="7">
    <location>
        <begin position="124"/>
        <end position="858"/>
    </location>
</feature>
<feature type="splice variant" id="VSP_025659" description="In isoform 2 and isoform 3." evidence="8">
    <location>
        <begin position="488"/>
        <end position="493"/>
    </location>
</feature>
<feature type="splice variant" id="VSP_025660" description="In isoform 4." evidence="8">
    <original>VLDGRKPTGGKLEVKVRLREPLSGQDVQMVTENWLVLEPRGL</original>
    <variation>MERFRRSEKSHRGTQEKAASLFP</variation>
    <location>
        <begin position="817"/>
        <end position="858"/>
    </location>
</feature>
<feature type="splice variant" id="VSP_025661" description="In isoform 3." evidence="8">
    <original>VRLREPLSGQDVQMVTENWLVLEPRGL</original>
    <variation>PMASTRRGVRPRLCRR</variation>
    <location>
        <begin position="832"/>
        <end position="858"/>
    </location>
</feature>
<feature type="sequence variant" id="VAR_062191" description="In dbSNP:rs11555349.">
    <original>M</original>
    <variation>T</variation>
    <location>
        <position position="35"/>
    </location>
</feature>
<comment type="function">
    <text evidence="5">Transcription factor that binds specifically to the DRE (dual repressor element) and represses HTR1A gene transcription in neuronal cells.</text>
</comment>
<comment type="subunit">
    <text evidence="6">Interacts with CHMP4B.</text>
</comment>
<comment type="interaction">
    <interactant intactId="EBI-10245204">
        <id>Q5T0F9</id>
    </interactant>
    <interactant intactId="EBI-724076">
        <id>Q99750</id>
        <label>MDFI</label>
    </interactant>
    <organismsDiffer>false</organismsDiffer>
    <experiments>3</experiments>
</comment>
<comment type="interaction">
    <interactant intactId="EBI-13176876">
        <id>Q5T0F9-3</id>
    </interactant>
    <interactant intactId="EBI-724076">
        <id>Q99750</id>
        <label>MDFI</label>
    </interactant>
    <organismsDiffer>false</organismsDiffer>
    <experiments>3</experiments>
</comment>
<comment type="subcellular location">
    <subcellularLocation>
        <location evidence="5">Nucleus</location>
    </subcellularLocation>
</comment>
<comment type="alternative products">
    <event type="alternative splicing"/>
    <isoform>
        <id>Q5T0F9-1</id>
        <name>1</name>
        <sequence type="displayed"/>
    </isoform>
    <isoform>
        <id>Q5T0F9-2</id>
        <name>2</name>
        <sequence type="described" ref="VSP_025659"/>
    </isoform>
    <isoform>
        <id>Q5T0F9-3</id>
        <name>3</name>
        <sequence type="described" ref="VSP_025657 VSP_025659 VSP_025661"/>
    </isoform>
    <isoform>
        <id>Q5T0F9-4</id>
        <name>4</name>
        <sequence type="described" ref="VSP_025658 VSP_025660"/>
    </isoform>
    <isoform>
        <id>Q5T0F9-5</id>
        <name>5</name>
        <sequence type="described" ref="VSP_025662 VSP_025663"/>
    </isoform>
</comment>
<comment type="tissue specificity">
    <text evidence="5">Widely distributed in brain and peripheral tissues.</text>
</comment>
<comment type="similarity">
    <text evidence="10">Belongs to the CC2D1 family.</text>
</comment>
<comment type="sequence caution" evidence="10">
    <conflict type="miscellaneous discrepancy">
        <sequence resource="EMBL-CDS" id="BAC85450"/>
    </conflict>
</comment>
<reference key="1">
    <citation type="journal article" date="2004" name="Nat. Genet.">
        <title>Complete sequencing and characterization of 21,243 full-length human cDNAs.</title>
        <authorList>
            <person name="Ota T."/>
            <person name="Suzuki Y."/>
            <person name="Nishikawa T."/>
            <person name="Otsuki T."/>
            <person name="Sugiyama T."/>
            <person name="Irie R."/>
            <person name="Wakamatsu A."/>
            <person name="Hayashi K."/>
            <person name="Sato H."/>
            <person name="Nagai K."/>
            <person name="Kimura K."/>
            <person name="Makita H."/>
            <person name="Sekine M."/>
            <person name="Obayashi M."/>
            <person name="Nishi T."/>
            <person name="Shibahara T."/>
            <person name="Tanaka T."/>
            <person name="Ishii S."/>
            <person name="Yamamoto J."/>
            <person name="Saito K."/>
            <person name="Kawai Y."/>
            <person name="Isono Y."/>
            <person name="Nakamura Y."/>
            <person name="Nagahari K."/>
            <person name="Murakami K."/>
            <person name="Yasuda T."/>
            <person name="Iwayanagi T."/>
            <person name="Wagatsuma M."/>
            <person name="Shiratori A."/>
            <person name="Sudo H."/>
            <person name="Hosoiri T."/>
            <person name="Kaku Y."/>
            <person name="Kodaira H."/>
            <person name="Kondo H."/>
            <person name="Sugawara M."/>
            <person name="Takahashi M."/>
            <person name="Kanda K."/>
            <person name="Yokoi T."/>
            <person name="Furuya T."/>
            <person name="Kikkawa E."/>
            <person name="Omura Y."/>
            <person name="Abe K."/>
            <person name="Kamihara K."/>
            <person name="Katsuta N."/>
            <person name="Sato K."/>
            <person name="Tanikawa M."/>
            <person name="Yamazaki M."/>
            <person name="Ninomiya K."/>
            <person name="Ishibashi T."/>
            <person name="Yamashita H."/>
            <person name="Murakawa K."/>
            <person name="Fujimori K."/>
            <person name="Tanai H."/>
            <person name="Kimata M."/>
            <person name="Watanabe M."/>
            <person name="Hiraoka S."/>
            <person name="Chiba Y."/>
            <person name="Ishida S."/>
            <person name="Ono Y."/>
            <person name="Takiguchi S."/>
            <person name="Watanabe S."/>
            <person name="Yosida M."/>
            <person name="Hotuta T."/>
            <person name="Kusano J."/>
            <person name="Kanehori K."/>
            <person name="Takahashi-Fujii A."/>
            <person name="Hara H."/>
            <person name="Tanase T.-O."/>
            <person name="Nomura Y."/>
            <person name="Togiya S."/>
            <person name="Komai F."/>
            <person name="Hara R."/>
            <person name="Takeuchi K."/>
            <person name="Arita M."/>
            <person name="Imose N."/>
            <person name="Musashino K."/>
            <person name="Yuuki H."/>
            <person name="Oshima A."/>
            <person name="Sasaki N."/>
            <person name="Aotsuka S."/>
            <person name="Yoshikawa Y."/>
            <person name="Matsunawa H."/>
            <person name="Ichihara T."/>
            <person name="Shiohata N."/>
            <person name="Sano S."/>
            <person name="Moriya S."/>
            <person name="Momiyama H."/>
            <person name="Satoh N."/>
            <person name="Takami S."/>
            <person name="Terashima Y."/>
            <person name="Suzuki O."/>
            <person name="Nakagawa S."/>
            <person name="Senoh A."/>
            <person name="Mizoguchi H."/>
            <person name="Goto Y."/>
            <person name="Shimizu F."/>
            <person name="Wakebe H."/>
            <person name="Hishigaki H."/>
            <person name="Watanabe T."/>
            <person name="Sugiyama A."/>
            <person name="Takemoto M."/>
            <person name="Kawakami B."/>
            <person name="Yamazaki M."/>
            <person name="Watanabe K."/>
            <person name="Kumagai A."/>
            <person name="Itakura S."/>
            <person name="Fukuzumi Y."/>
            <person name="Fujimori Y."/>
            <person name="Komiyama M."/>
            <person name="Tashiro H."/>
            <person name="Tanigami A."/>
            <person name="Fujiwara T."/>
            <person name="Ono T."/>
            <person name="Yamada K."/>
            <person name="Fujii Y."/>
            <person name="Ozaki K."/>
            <person name="Hirao M."/>
            <person name="Ohmori Y."/>
            <person name="Kawabata A."/>
            <person name="Hikiji T."/>
            <person name="Kobatake N."/>
            <person name="Inagaki H."/>
            <person name="Ikema Y."/>
            <person name="Okamoto S."/>
            <person name="Okitani R."/>
            <person name="Kawakami T."/>
            <person name="Noguchi S."/>
            <person name="Itoh T."/>
            <person name="Shigeta K."/>
            <person name="Senba T."/>
            <person name="Matsumura K."/>
            <person name="Nakajima Y."/>
            <person name="Mizuno T."/>
            <person name="Morinaga M."/>
            <person name="Sasaki M."/>
            <person name="Togashi T."/>
            <person name="Oyama M."/>
            <person name="Hata H."/>
            <person name="Watanabe M."/>
            <person name="Komatsu T."/>
            <person name="Mizushima-Sugano J."/>
            <person name="Satoh T."/>
            <person name="Shirai Y."/>
            <person name="Takahashi Y."/>
            <person name="Nakagawa K."/>
            <person name="Okumura K."/>
            <person name="Nagase T."/>
            <person name="Nomura N."/>
            <person name="Kikuchi H."/>
            <person name="Masuho Y."/>
            <person name="Yamashita R."/>
            <person name="Nakai K."/>
            <person name="Yada T."/>
            <person name="Nakamura Y."/>
            <person name="Ohara O."/>
            <person name="Isogai T."/>
            <person name="Sugano S."/>
        </authorList>
    </citation>
    <scope>NUCLEOTIDE SEQUENCE [LARGE SCALE MRNA] (ISOFORM 5)</scope>
    <source>
        <tissue>Umbilical cord</tissue>
    </source>
</reference>
<reference key="2">
    <citation type="journal article" date="2006" name="Nature">
        <title>The DNA sequence and biological annotation of human chromosome 1.</title>
        <authorList>
            <person name="Gregory S.G."/>
            <person name="Barlow K.F."/>
            <person name="McLay K.E."/>
            <person name="Kaul R."/>
            <person name="Swarbreck D."/>
            <person name="Dunham A."/>
            <person name="Scott C.E."/>
            <person name="Howe K.L."/>
            <person name="Woodfine K."/>
            <person name="Spencer C.C.A."/>
            <person name="Jones M.C."/>
            <person name="Gillson C."/>
            <person name="Searle S."/>
            <person name="Zhou Y."/>
            <person name="Kokocinski F."/>
            <person name="McDonald L."/>
            <person name="Evans R."/>
            <person name="Phillips K."/>
            <person name="Atkinson A."/>
            <person name="Cooper R."/>
            <person name="Jones C."/>
            <person name="Hall R.E."/>
            <person name="Andrews T.D."/>
            <person name="Lloyd C."/>
            <person name="Ainscough R."/>
            <person name="Almeida J.P."/>
            <person name="Ambrose K.D."/>
            <person name="Anderson F."/>
            <person name="Andrew R.W."/>
            <person name="Ashwell R.I.S."/>
            <person name="Aubin K."/>
            <person name="Babbage A.K."/>
            <person name="Bagguley C.L."/>
            <person name="Bailey J."/>
            <person name="Beasley H."/>
            <person name="Bethel G."/>
            <person name="Bird C.P."/>
            <person name="Bray-Allen S."/>
            <person name="Brown J.Y."/>
            <person name="Brown A.J."/>
            <person name="Buckley D."/>
            <person name="Burton J."/>
            <person name="Bye J."/>
            <person name="Carder C."/>
            <person name="Chapman J.C."/>
            <person name="Clark S.Y."/>
            <person name="Clarke G."/>
            <person name="Clee C."/>
            <person name="Cobley V."/>
            <person name="Collier R.E."/>
            <person name="Corby N."/>
            <person name="Coville G.J."/>
            <person name="Davies J."/>
            <person name="Deadman R."/>
            <person name="Dunn M."/>
            <person name="Earthrowl M."/>
            <person name="Ellington A.G."/>
            <person name="Errington H."/>
            <person name="Frankish A."/>
            <person name="Frankland J."/>
            <person name="French L."/>
            <person name="Garner P."/>
            <person name="Garnett J."/>
            <person name="Gay L."/>
            <person name="Ghori M.R.J."/>
            <person name="Gibson R."/>
            <person name="Gilby L.M."/>
            <person name="Gillett W."/>
            <person name="Glithero R.J."/>
            <person name="Grafham D.V."/>
            <person name="Griffiths C."/>
            <person name="Griffiths-Jones S."/>
            <person name="Grocock R."/>
            <person name="Hammond S."/>
            <person name="Harrison E.S.I."/>
            <person name="Hart E."/>
            <person name="Haugen E."/>
            <person name="Heath P.D."/>
            <person name="Holmes S."/>
            <person name="Holt K."/>
            <person name="Howden P.J."/>
            <person name="Hunt A.R."/>
            <person name="Hunt S.E."/>
            <person name="Hunter G."/>
            <person name="Isherwood J."/>
            <person name="James R."/>
            <person name="Johnson C."/>
            <person name="Johnson D."/>
            <person name="Joy A."/>
            <person name="Kay M."/>
            <person name="Kershaw J.K."/>
            <person name="Kibukawa M."/>
            <person name="Kimberley A.M."/>
            <person name="King A."/>
            <person name="Knights A.J."/>
            <person name="Lad H."/>
            <person name="Laird G."/>
            <person name="Lawlor S."/>
            <person name="Leongamornlert D.A."/>
            <person name="Lloyd D.M."/>
            <person name="Loveland J."/>
            <person name="Lovell J."/>
            <person name="Lush M.J."/>
            <person name="Lyne R."/>
            <person name="Martin S."/>
            <person name="Mashreghi-Mohammadi M."/>
            <person name="Matthews L."/>
            <person name="Matthews N.S.W."/>
            <person name="McLaren S."/>
            <person name="Milne S."/>
            <person name="Mistry S."/>
            <person name="Moore M.J.F."/>
            <person name="Nickerson T."/>
            <person name="O'Dell C.N."/>
            <person name="Oliver K."/>
            <person name="Palmeiri A."/>
            <person name="Palmer S.A."/>
            <person name="Parker A."/>
            <person name="Patel D."/>
            <person name="Pearce A.V."/>
            <person name="Peck A.I."/>
            <person name="Pelan S."/>
            <person name="Phelps K."/>
            <person name="Phillimore B.J."/>
            <person name="Plumb R."/>
            <person name="Rajan J."/>
            <person name="Raymond C."/>
            <person name="Rouse G."/>
            <person name="Saenphimmachak C."/>
            <person name="Sehra H.K."/>
            <person name="Sheridan E."/>
            <person name="Shownkeen R."/>
            <person name="Sims S."/>
            <person name="Skuce C.D."/>
            <person name="Smith M."/>
            <person name="Steward C."/>
            <person name="Subramanian S."/>
            <person name="Sycamore N."/>
            <person name="Tracey A."/>
            <person name="Tromans A."/>
            <person name="Van Helmond Z."/>
            <person name="Wall M."/>
            <person name="Wallis J.M."/>
            <person name="White S."/>
            <person name="Whitehead S.L."/>
            <person name="Wilkinson J.E."/>
            <person name="Willey D.L."/>
            <person name="Williams H."/>
            <person name="Wilming L."/>
            <person name="Wray P.W."/>
            <person name="Wu Z."/>
            <person name="Coulson A."/>
            <person name="Vaudin M."/>
            <person name="Sulston J.E."/>
            <person name="Durbin R.M."/>
            <person name="Hubbard T."/>
            <person name="Wooster R."/>
            <person name="Dunham I."/>
            <person name="Carter N.P."/>
            <person name="McVean G."/>
            <person name="Ross M.T."/>
            <person name="Harrow J."/>
            <person name="Olson M.V."/>
            <person name="Beck S."/>
            <person name="Rogers J."/>
            <person name="Bentley D.R."/>
        </authorList>
    </citation>
    <scope>NUCLEOTIDE SEQUENCE [LARGE SCALE GENOMIC DNA]</scope>
</reference>
<reference key="3">
    <citation type="journal article" date="2004" name="Genome Res.">
        <title>The status, quality, and expansion of the NIH full-length cDNA project: the Mammalian Gene Collection (MGC).</title>
        <authorList>
            <consortium name="The MGC Project Team"/>
        </authorList>
    </citation>
    <scope>NUCLEOTIDE SEQUENCE [LARGE SCALE MRNA] (ISOFORMS 3 AND 4)</scope>
    <scope>NUCLEOTIDE SEQUENCE [LARGE SCALE MRNA] OF 462-858 (ISOFORM 2)</scope>
    <source>
        <tissue>Skin</tissue>
        <tissue>Testis</tissue>
        <tissue>Uterus</tissue>
    </source>
</reference>
<reference key="4">
    <citation type="journal article" date="2001" name="DNA Res.">
        <title>Prediction of the coding sequences of unidentified human genes. XX. The complete sequences of 100 new cDNA clones from brain which code for large proteins in vitro.</title>
        <authorList>
            <person name="Nagase T."/>
            <person name="Nakayama M."/>
            <person name="Nakajima D."/>
            <person name="Kikuno R."/>
            <person name="Ohara O."/>
        </authorList>
    </citation>
    <scope>NUCLEOTIDE SEQUENCE [LARGE SCALE MRNA] OF 141-858 (ISOFORM 1)</scope>
    <source>
        <tissue>Brain</tissue>
    </source>
</reference>
<reference key="5">
    <citation type="journal article" date="2009" name="Biol. Psychiatry">
        <title>Human Freud-2/CC2D1B: a novel repressor of postsynaptic serotonin-1A receptor expression.</title>
        <authorList>
            <person name="Hadjighassem M.R."/>
            <person name="Austin M.C."/>
            <person name="Szewczyk B."/>
            <person name="Daigle M."/>
            <person name="Stockmeier C.A."/>
            <person name="Albert P.R."/>
        </authorList>
    </citation>
    <scope>FUNCTION</scope>
    <scope>TISSUE SPECIFICITY</scope>
    <scope>SUBCELLULAR LOCATION</scope>
</reference>
<reference key="6">
    <citation type="journal article" date="2011" name="BMC Syst. Biol.">
        <title>Initial characterization of the human central proteome.</title>
        <authorList>
            <person name="Burkard T.R."/>
            <person name="Planyavsky M."/>
            <person name="Kaupe I."/>
            <person name="Breitwieser F.P."/>
            <person name="Buerckstuemmer T."/>
            <person name="Bennett K.L."/>
            <person name="Superti-Furga G."/>
            <person name="Colinge J."/>
        </authorList>
    </citation>
    <scope>IDENTIFICATION BY MASS SPECTROMETRY [LARGE SCALE ANALYSIS]</scope>
</reference>
<reference key="7">
    <citation type="journal article" date="2013" name="J. Proteome Res.">
        <title>Toward a comprehensive characterization of a human cancer cell phosphoproteome.</title>
        <authorList>
            <person name="Zhou H."/>
            <person name="Di Palma S."/>
            <person name="Preisinger C."/>
            <person name="Peng M."/>
            <person name="Polat A.N."/>
            <person name="Heck A.J."/>
            <person name="Mohammed S."/>
        </authorList>
    </citation>
    <scope>PHOSPHORYLATION [LARGE SCALE ANALYSIS] AT SER-209</scope>
    <scope>IDENTIFICATION BY MASS SPECTROMETRY [LARGE SCALE ANALYSIS]</scope>
    <source>
        <tissue>Erythroleukemia</tissue>
    </source>
</reference>
<reference key="8">
    <citation type="journal article" date="2014" name="J. Proteomics">
        <title>An enzyme assisted RP-RPLC approach for in-depth analysis of human liver phosphoproteome.</title>
        <authorList>
            <person name="Bian Y."/>
            <person name="Song C."/>
            <person name="Cheng K."/>
            <person name="Dong M."/>
            <person name="Wang F."/>
            <person name="Huang J."/>
            <person name="Sun D."/>
            <person name="Wang L."/>
            <person name="Ye M."/>
            <person name="Zou H."/>
        </authorList>
    </citation>
    <scope>IDENTIFICATION BY MASS SPECTROMETRY [LARGE SCALE ANALYSIS]</scope>
    <source>
        <tissue>Liver</tissue>
    </source>
</reference>
<reference key="9">
    <citation type="journal article" date="2020" name="BMC Biol.">
        <title>Lethal (2) giant discs (Lgd)/CC2D1 is required for the full activity of the ESCRT machinery.</title>
        <authorList>
            <person name="Baeumers M."/>
            <person name="Ruhnau K."/>
            <person name="Breuer T."/>
            <person name="Pannen H."/>
            <person name="Goerlich B."/>
            <person name="Kniebel A."/>
            <person name="Haensch S."/>
            <person name="Weidtkamp-Peters S."/>
            <person name="Schmitt L."/>
            <person name="Klein T."/>
        </authorList>
    </citation>
    <scope>INTERACTION WITH CHMP4B</scope>
</reference>
<dbReference type="EMBL" id="AK130874">
    <property type="protein sequence ID" value="BAC85450.1"/>
    <property type="status" value="ALT_SEQ"/>
    <property type="molecule type" value="mRNA"/>
</dbReference>
<dbReference type="EMBL" id="AL513218">
    <property type="status" value="NOT_ANNOTATED_CDS"/>
    <property type="molecule type" value="Genomic_DNA"/>
</dbReference>
<dbReference type="EMBL" id="BC007912">
    <property type="protein sequence ID" value="AAH07912.2"/>
    <property type="molecule type" value="mRNA"/>
</dbReference>
<dbReference type="EMBL" id="BC016880">
    <property type="protein sequence ID" value="AAH16880.1"/>
    <property type="molecule type" value="mRNA"/>
</dbReference>
<dbReference type="EMBL" id="BC039308">
    <property type="protein sequence ID" value="AAH39308.1"/>
    <property type="molecule type" value="mRNA"/>
</dbReference>
<dbReference type="EMBL" id="AB058739">
    <property type="protein sequence ID" value="BAB47465.1"/>
    <property type="molecule type" value="mRNA"/>
</dbReference>
<dbReference type="CCDS" id="CCDS30714.1">
    <molecule id="Q5T0F9-1"/>
</dbReference>
<dbReference type="CCDS" id="CCDS81323.1">
    <molecule id="Q5T0F9-2"/>
</dbReference>
<dbReference type="RefSeq" id="NP_001317514.1">
    <molecule id="Q5T0F9-2"/>
    <property type="nucleotide sequence ID" value="NM_001330585.2"/>
</dbReference>
<dbReference type="RefSeq" id="NP_115825.1">
    <molecule id="Q5T0F9-1"/>
    <property type="nucleotide sequence ID" value="NM_032449.3"/>
</dbReference>
<dbReference type="RefSeq" id="XP_005270647.1">
    <property type="nucleotide sequence ID" value="XM_005270590.2"/>
</dbReference>
<dbReference type="SMR" id="Q5T0F9"/>
<dbReference type="BioGRID" id="128291">
    <property type="interactions" value="44"/>
</dbReference>
<dbReference type="FunCoup" id="Q5T0F9">
    <property type="interactions" value="4451"/>
</dbReference>
<dbReference type="IntAct" id="Q5T0F9">
    <property type="interactions" value="21"/>
</dbReference>
<dbReference type="STRING" id="9606.ENSP00000360642"/>
<dbReference type="GlyGen" id="Q5T0F9">
    <property type="glycosylation" value="3 sites, 1 O-linked glycan (1 site)"/>
</dbReference>
<dbReference type="iPTMnet" id="Q5T0F9"/>
<dbReference type="PhosphoSitePlus" id="Q5T0F9"/>
<dbReference type="BioMuta" id="CC2D1B"/>
<dbReference type="DMDM" id="74744295"/>
<dbReference type="jPOST" id="Q5T0F9"/>
<dbReference type="MassIVE" id="Q5T0F9"/>
<dbReference type="PaxDb" id="9606-ENSP00000360642"/>
<dbReference type="PeptideAtlas" id="Q5T0F9"/>
<dbReference type="ProteomicsDB" id="64156">
    <molecule id="Q5T0F9-1"/>
</dbReference>
<dbReference type="ProteomicsDB" id="64157">
    <molecule id="Q5T0F9-2"/>
</dbReference>
<dbReference type="ProteomicsDB" id="64158">
    <molecule id="Q5T0F9-3"/>
</dbReference>
<dbReference type="ProteomicsDB" id="64159">
    <molecule id="Q5T0F9-4"/>
</dbReference>
<dbReference type="ProteomicsDB" id="64160">
    <molecule id="Q5T0F9-5"/>
</dbReference>
<dbReference type="Pumba" id="Q5T0F9"/>
<dbReference type="Antibodypedia" id="33001">
    <property type="antibodies" value="63 antibodies from 21 providers"/>
</dbReference>
<dbReference type="DNASU" id="200014"/>
<dbReference type="Ensembl" id="ENST00000284376.8">
    <molecule id="Q5T0F9-2"/>
    <property type="protein sequence ID" value="ENSP00000284376.3"/>
    <property type="gene ID" value="ENSG00000154222.15"/>
</dbReference>
<dbReference type="Ensembl" id="ENST00000371586.6">
    <molecule id="Q5T0F9-1"/>
    <property type="protein sequence ID" value="ENSP00000360642.2"/>
    <property type="gene ID" value="ENSG00000154222.15"/>
</dbReference>
<dbReference type="GeneID" id="200014"/>
<dbReference type="KEGG" id="hsa:200014"/>
<dbReference type="MANE-Select" id="ENST00000284376.8">
    <molecule id="Q5T0F9-2"/>
    <property type="protein sequence ID" value="ENSP00000284376.3"/>
    <property type="RefSeq nucleotide sequence ID" value="NM_001330585.2"/>
    <property type="RefSeq protein sequence ID" value="NP_001317514.1"/>
</dbReference>
<dbReference type="UCSC" id="uc001ctq.3">
    <molecule id="Q5T0F9-1"/>
    <property type="organism name" value="human"/>
</dbReference>
<dbReference type="AGR" id="HGNC:29386"/>
<dbReference type="CTD" id="200014"/>
<dbReference type="GeneCards" id="CC2D1B"/>
<dbReference type="HGNC" id="HGNC:29386">
    <property type="gene designation" value="CC2D1B"/>
</dbReference>
<dbReference type="HPA" id="ENSG00000154222">
    <property type="expression patterns" value="Low tissue specificity"/>
</dbReference>
<dbReference type="neXtProt" id="NX_Q5T0F9"/>
<dbReference type="OpenTargets" id="ENSG00000154222"/>
<dbReference type="PharmGKB" id="PA142672198"/>
<dbReference type="VEuPathDB" id="HostDB:ENSG00000154222"/>
<dbReference type="eggNOG" id="KOG3837">
    <property type="taxonomic scope" value="Eukaryota"/>
</dbReference>
<dbReference type="GeneTree" id="ENSGT00390000009595"/>
<dbReference type="InParanoid" id="Q5T0F9"/>
<dbReference type="OMA" id="NNNCPEY"/>
<dbReference type="OrthoDB" id="19996at2759"/>
<dbReference type="PAN-GO" id="Q5T0F9">
    <property type="GO annotations" value="4 GO annotations based on evolutionary models"/>
</dbReference>
<dbReference type="PhylomeDB" id="Q5T0F9"/>
<dbReference type="TreeFam" id="TF314229"/>
<dbReference type="PathwayCommons" id="Q5T0F9"/>
<dbReference type="Reactome" id="R-HSA-9668328">
    <property type="pathway name" value="Sealing of the nuclear envelope (NE) by ESCRT-III"/>
</dbReference>
<dbReference type="SignaLink" id="Q5T0F9"/>
<dbReference type="SIGNOR" id="Q5T0F9"/>
<dbReference type="BioGRID-ORCS" id="200014">
    <property type="hits" value="18 hits in 1161 CRISPR screens"/>
</dbReference>
<dbReference type="ChiTaRS" id="CC2D1B">
    <property type="organism name" value="human"/>
</dbReference>
<dbReference type="GenomeRNAi" id="200014"/>
<dbReference type="Pharos" id="Q5T0F9">
    <property type="development level" value="Tbio"/>
</dbReference>
<dbReference type="PRO" id="PR:Q5T0F9"/>
<dbReference type="Proteomes" id="UP000005640">
    <property type="component" value="Chromosome 1"/>
</dbReference>
<dbReference type="RNAct" id="Q5T0F9">
    <property type="molecule type" value="protein"/>
</dbReference>
<dbReference type="Bgee" id="ENSG00000154222">
    <property type="expression patterns" value="Expressed in adenohypophysis and 151 other cell types or tissues"/>
</dbReference>
<dbReference type="ExpressionAtlas" id="Q5T0F9">
    <property type="expression patterns" value="baseline and differential"/>
</dbReference>
<dbReference type="GO" id="GO:0005829">
    <property type="term" value="C:cytosol"/>
    <property type="evidence" value="ECO:0007669"/>
    <property type="project" value="Ensembl"/>
</dbReference>
<dbReference type="GO" id="GO:0010008">
    <property type="term" value="C:endosome membrane"/>
    <property type="evidence" value="ECO:0007669"/>
    <property type="project" value="Ensembl"/>
</dbReference>
<dbReference type="GO" id="GO:0043231">
    <property type="term" value="C:intracellular membrane-bounded organelle"/>
    <property type="evidence" value="ECO:0000314"/>
    <property type="project" value="HPA"/>
</dbReference>
<dbReference type="GO" id="GO:0005635">
    <property type="term" value="C:nuclear envelope"/>
    <property type="evidence" value="ECO:0000304"/>
    <property type="project" value="Reactome"/>
</dbReference>
<dbReference type="GO" id="GO:0005654">
    <property type="term" value="C:nucleoplasm"/>
    <property type="evidence" value="ECO:0000314"/>
    <property type="project" value="HPA"/>
</dbReference>
<dbReference type="GO" id="GO:0005634">
    <property type="term" value="C:nucleus"/>
    <property type="evidence" value="ECO:0000318"/>
    <property type="project" value="GO_Central"/>
</dbReference>
<dbReference type="GO" id="GO:0000981">
    <property type="term" value="F:DNA-binding transcription factor activity, RNA polymerase II-specific"/>
    <property type="evidence" value="ECO:0000318"/>
    <property type="project" value="GO_Central"/>
</dbReference>
<dbReference type="GO" id="GO:0001227">
    <property type="term" value="F:DNA-binding transcription repressor activity, RNA polymerase II-specific"/>
    <property type="evidence" value="ECO:0007669"/>
    <property type="project" value="Ensembl"/>
</dbReference>
<dbReference type="GO" id="GO:0000978">
    <property type="term" value="F:RNA polymerase II cis-regulatory region sequence-specific DNA binding"/>
    <property type="evidence" value="ECO:0000318"/>
    <property type="project" value="GO_Central"/>
</dbReference>
<dbReference type="GO" id="GO:0006357">
    <property type="term" value="P:regulation of transcription by RNA polymerase II"/>
    <property type="evidence" value="ECO:0000318"/>
    <property type="project" value="GO_Central"/>
</dbReference>
<dbReference type="CDD" id="cd08690">
    <property type="entry name" value="C2_Freud-1"/>
    <property type="match status" value="1"/>
</dbReference>
<dbReference type="FunFam" id="2.60.40.150:FF:000104">
    <property type="entry name" value="coiled-coil and C2 domain-containing protein 1B"/>
    <property type="match status" value="1"/>
</dbReference>
<dbReference type="Gene3D" id="2.60.40.150">
    <property type="entry name" value="C2 domain"/>
    <property type="match status" value="1"/>
</dbReference>
<dbReference type="InterPro" id="IPR000008">
    <property type="entry name" value="C2_dom"/>
</dbReference>
<dbReference type="InterPro" id="IPR035892">
    <property type="entry name" value="C2_domain_sf"/>
</dbReference>
<dbReference type="InterPro" id="IPR037772">
    <property type="entry name" value="C2_Freud"/>
</dbReference>
<dbReference type="InterPro" id="IPR039725">
    <property type="entry name" value="CC2D1A/B"/>
</dbReference>
<dbReference type="InterPro" id="IPR006608">
    <property type="entry name" value="CC2D1A/B_DM14"/>
</dbReference>
<dbReference type="PANTHER" id="PTHR13076">
    <property type="entry name" value="COILED-COIL AND C2 DOMAIN-CONTAINING PROTEIN 1-LIKE"/>
    <property type="match status" value="1"/>
</dbReference>
<dbReference type="PANTHER" id="PTHR13076:SF5">
    <property type="entry name" value="COILED-COIL AND C2 DOMAIN-CONTAINING PROTEIN 1B"/>
    <property type="match status" value="1"/>
</dbReference>
<dbReference type="Pfam" id="PF00168">
    <property type="entry name" value="C2"/>
    <property type="match status" value="1"/>
</dbReference>
<dbReference type="Pfam" id="PF21528">
    <property type="entry name" value="CC2D1A-B_DM14"/>
    <property type="match status" value="4"/>
</dbReference>
<dbReference type="SMART" id="SM00239">
    <property type="entry name" value="C2"/>
    <property type="match status" value="1"/>
</dbReference>
<dbReference type="SMART" id="SM00685">
    <property type="entry name" value="DM14"/>
    <property type="match status" value="4"/>
</dbReference>
<dbReference type="SUPFAM" id="SSF49562">
    <property type="entry name" value="C2 domain (Calcium/lipid-binding domain, CaLB)"/>
    <property type="match status" value="1"/>
</dbReference>
<dbReference type="PROSITE" id="PS50004">
    <property type="entry name" value="C2"/>
    <property type="match status" value="1"/>
</dbReference>